<evidence type="ECO:0000250" key="1">
    <source>
        <dbReference type="UniProtKB" id="C0HJY4"/>
    </source>
</evidence>
<evidence type="ECO:0000269" key="2">
    <source>
    </source>
</evidence>
<evidence type="ECO:0000303" key="3">
    <source>
    </source>
</evidence>
<evidence type="ECO:0000305" key="4"/>
<evidence type="ECO:0000305" key="5">
    <source>
    </source>
</evidence>
<accession>C0HJY5</accession>
<reference key="1">
    <citation type="journal article" date="2016" name="Biochim. Biophys. Acta">
        <title>Isolation and characterization of a structurally unique beta-hairpin venom peptide from the predatory ant Anochetus emarginatus.</title>
        <authorList>
            <person name="Touchard A."/>
            <person name="Brust A."/>
            <person name="Cardoso F."/>
            <person name="Chin Y.-K."/>
            <person name="Herzig V."/>
            <person name="Jin A.-H."/>
            <person name="Dejean A."/>
            <person name="Alewood P."/>
            <person name="King G."/>
            <person name="Orivel J."/>
            <person name="Escoubas P."/>
        </authorList>
    </citation>
    <scope>PROTEIN SEQUENCE</scope>
    <scope>SUBCELLULAR LOCATION</scope>
    <scope>MASS SPECTROMETRY</scope>
    <scope>AMIDATION AT CYS-18</scope>
    <scope>IDENTIFICATION BY MASS SPECTROMETRY</scope>
    <source>
        <tissue>Venom</tissue>
    </source>
</reference>
<dbReference type="GO" id="GO:0005576">
    <property type="term" value="C:extracellular region"/>
    <property type="evidence" value="ECO:0007669"/>
    <property type="project" value="UniProtKB-SubCell"/>
</dbReference>
<dbReference type="GO" id="GO:0090729">
    <property type="term" value="F:toxin activity"/>
    <property type="evidence" value="ECO:0007669"/>
    <property type="project" value="UniProtKB-KW"/>
</dbReference>
<organism>
    <name type="scientific">Anochetus emarginatus</name>
    <name type="common">Ant</name>
    <name type="synonym">Stenomyrmex emarginatus</name>
    <dbReference type="NCBI Taxonomy" id="486636"/>
    <lineage>
        <taxon>Eukaryota</taxon>
        <taxon>Metazoa</taxon>
        <taxon>Ecdysozoa</taxon>
        <taxon>Arthropoda</taxon>
        <taxon>Hexapoda</taxon>
        <taxon>Insecta</taxon>
        <taxon>Pterygota</taxon>
        <taxon>Neoptera</taxon>
        <taxon>Endopterygota</taxon>
        <taxon>Hymenoptera</taxon>
        <taxon>Apocrita</taxon>
        <taxon>Aculeata</taxon>
        <taxon>Formicoidea</taxon>
        <taxon>Formicidae</taxon>
        <taxon>Ponerinae</taxon>
        <taxon>Ponerini</taxon>
        <taxon>Anochetus</taxon>
    </lineage>
</organism>
<sequence length="18" mass="1922">RYCPSGCRKKPYGGGCSC</sequence>
<feature type="peptide" id="PRO_0000437874" description="U1-poneritoxin-Ae1b" evidence="2">
    <location>
        <begin position="1"/>
        <end position="18"/>
    </location>
</feature>
<feature type="modified residue" description="Cysteine amide" evidence="2">
    <location>
        <position position="18"/>
    </location>
</feature>
<feature type="disulfide bond" evidence="1">
    <location>
        <begin position="3"/>
        <end position="16"/>
    </location>
</feature>
<feature type="disulfide bond" evidence="1">
    <location>
        <begin position="7"/>
        <end position="18"/>
    </location>
</feature>
<name>PON1B_ANOEM</name>
<comment type="subcellular location">
    <subcellularLocation>
        <location evidence="2">Secreted</location>
    </subcellularLocation>
</comment>
<comment type="tissue specificity">
    <text evidence="5">Expressed by the venom gland.</text>
</comment>
<comment type="mass spectrometry" mass="1916.96" error="0.2" method="MALDI" evidence="2"/>
<comment type="similarity">
    <text evidence="4">Belongs to the poneritoxin-Ae1 family.</text>
</comment>
<protein>
    <recommendedName>
        <fullName evidence="3">U1-poneritoxin-Ae1b</fullName>
        <shortName evidence="3">U1-PONTX-Ae1b</shortName>
    </recommendedName>
    <alternativeName>
        <fullName evidence="4">Poneratoxin</fullName>
    </alternativeName>
</protein>
<proteinExistence type="evidence at protein level"/>
<keyword id="KW-0027">Amidation</keyword>
<keyword id="KW-0903">Direct protein sequencing</keyword>
<keyword id="KW-1015">Disulfide bond</keyword>
<keyword id="KW-0964">Secreted</keyword>
<keyword id="KW-0800">Toxin</keyword>